<sequence>MAIGLIGRKVGMTRIFTEDGVSIPVTVIEVAGNRVTQVKTLETDGYRALQVTTGTKKANRITKPEAGHFAKSGVEAGRGLWELRLADGEGEGIEVGAELNVGIFADVAKVDVTGQSKGKGFQGGVKRWNFRTQDMTHGNSLSHRSNGSIGQNQTPGRVFKGKKMSGHMGAERVTTQNLDVVRVDVERNLLLVKGAVPGATNGDLIIKPAVKA</sequence>
<evidence type="ECO:0000255" key="1">
    <source>
        <dbReference type="HAMAP-Rule" id="MF_01325"/>
    </source>
</evidence>
<evidence type="ECO:0000256" key="2">
    <source>
        <dbReference type="SAM" id="MobiDB-lite"/>
    </source>
</evidence>
<evidence type="ECO:0000305" key="3"/>
<organism>
    <name type="scientific">Shewanella sp. (strain MR-4)</name>
    <dbReference type="NCBI Taxonomy" id="60480"/>
    <lineage>
        <taxon>Bacteria</taxon>
        <taxon>Pseudomonadati</taxon>
        <taxon>Pseudomonadota</taxon>
        <taxon>Gammaproteobacteria</taxon>
        <taxon>Alteromonadales</taxon>
        <taxon>Shewanellaceae</taxon>
        <taxon>Shewanella</taxon>
    </lineage>
</organism>
<reference key="1">
    <citation type="submission" date="2006-08" db="EMBL/GenBank/DDBJ databases">
        <title>Complete sequence of Shewanella sp. MR-4.</title>
        <authorList>
            <consortium name="US DOE Joint Genome Institute"/>
            <person name="Copeland A."/>
            <person name="Lucas S."/>
            <person name="Lapidus A."/>
            <person name="Barry K."/>
            <person name="Detter J.C."/>
            <person name="Glavina del Rio T."/>
            <person name="Hammon N."/>
            <person name="Israni S."/>
            <person name="Dalin E."/>
            <person name="Tice H."/>
            <person name="Pitluck S."/>
            <person name="Kiss H."/>
            <person name="Brettin T."/>
            <person name="Bruce D."/>
            <person name="Han C."/>
            <person name="Tapia R."/>
            <person name="Gilna P."/>
            <person name="Schmutz J."/>
            <person name="Larimer F."/>
            <person name="Land M."/>
            <person name="Hauser L."/>
            <person name="Kyrpides N."/>
            <person name="Mikhailova N."/>
            <person name="Nealson K."/>
            <person name="Konstantinidis K."/>
            <person name="Klappenbach J."/>
            <person name="Tiedje J."/>
            <person name="Richardson P."/>
        </authorList>
    </citation>
    <scope>NUCLEOTIDE SEQUENCE [LARGE SCALE GENOMIC DNA]</scope>
    <source>
        <strain>MR-4</strain>
    </source>
</reference>
<accession>Q0HNT7</accession>
<protein>
    <recommendedName>
        <fullName evidence="1">Large ribosomal subunit protein uL3</fullName>
    </recommendedName>
    <alternativeName>
        <fullName evidence="3">50S ribosomal protein L3</fullName>
    </alternativeName>
</protein>
<gene>
    <name evidence="1" type="primary">rplC</name>
    <name type="ordered locus">Shewmr4_0199</name>
</gene>
<name>RL3_SHESM</name>
<dbReference type="EMBL" id="CP000446">
    <property type="protein sequence ID" value="ABI37280.1"/>
    <property type="molecule type" value="Genomic_DNA"/>
</dbReference>
<dbReference type="RefSeq" id="WP_011070617.1">
    <property type="nucleotide sequence ID" value="NC_008321.1"/>
</dbReference>
<dbReference type="SMR" id="Q0HNT7"/>
<dbReference type="GeneID" id="94726186"/>
<dbReference type="KEGG" id="she:Shewmr4_0199"/>
<dbReference type="HOGENOM" id="CLU_044142_4_1_6"/>
<dbReference type="GO" id="GO:0022625">
    <property type="term" value="C:cytosolic large ribosomal subunit"/>
    <property type="evidence" value="ECO:0007669"/>
    <property type="project" value="TreeGrafter"/>
</dbReference>
<dbReference type="GO" id="GO:0019843">
    <property type="term" value="F:rRNA binding"/>
    <property type="evidence" value="ECO:0007669"/>
    <property type="project" value="UniProtKB-UniRule"/>
</dbReference>
<dbReference type="GO" id="GO:0003735">
    <property type="term" value="F:structural constituent of ribosome"/>
    <property type="evidence" value="ECO:0007669"/>
    <property type="project" value="InterPro"/>
</dbReference>
<dbReference type="GO" id="GO:0006412">
    <property type="term" value="P:translation"/>
    <property type="evidence" value="ECO:0007669"/>
    <property type="project" value="UniProtKB-UniRule"/>
</dbReference>
<dbReference type="FunFam" id="2.40.30.10:FF:000004">
    <property type="entry name" value="50S ribosomal protein L3"/>
    <property type="match status" value="1"/>
</dbReference>
<dbReference type="FunFam" id="3.30.160.810:FF:000001">
    <property type="entry name" value="50S ribosomal protein L3"/>
    <property type="match status" value="1"/>
</dbReference>
<dbReference type="Gene3D" id="3.30.160.810">
    <property type="match status" value="1"/>
</dbReference>
<dbReference type="Gene3D" id="2.40.30.10">
    <property type="entry name" value="Translation factors"/>
    <property type="match status" value="1"/>
</dbReference>
<dbReference type="HAMAP" id="MF_01325_B">
    <property type="entry name" value="Ribosomal_uL3_B"/>
    <property type="match status" value="1"/>
</dbReference>
<dbReference type="InterPro" id="IPR000597">
    <property type="entry name" value="Ribosomal_uL3"/>
</dbReference>
<dbReference type="InterPro" id="IPR019927">
    <property type="entry name" value="Ribosomal_uL3_bac/org-type"/>
</dbReference>
<dbReference type="InterPro" id="IPR019926">
    <property type="entry name" value="Ribosomal_uL3_CS"/>
</dbReference>
<dbReference type="InterPro" id="IPR009000">
    <property type="entry name" value="Transl_B-barrel_sf"/>
</dbReference>
<dbReference type="NCBIfam" id="TIGR03625">
    <property type="entry name" value="L3_bact"/>
    <property type="match status" value="1"/>
</dbReference>
<dbReference type="PANTHER" id="PTHR11229">
    <property type="entry name" value="50S RIBOSOMAL PROTEIN L3"/>
    <property type="match status" value="1"/>
</dbReference>
<dbReference type="PANTHER" id="PTHR11229:SF16">
    <property type="entry name" value="LARGE RIBOSOMAL SUBUNIT PROTEIN UL3C"/>
    <property type="match status" value="1"/>
</dbReference>
<dbReference type="Pfam" id="PF00297">
    <property type="entry name" value="Ribosomal_L3"/>
    <property type="match status" value="1"/>
</dbReference>
<dbReference type="SUPFAM" id="SSF50447">
    <property type="entry name" value="Translation proteins"/>
    <property type="match status" value="1"/>
</dbReference>
<dbReference type="PROSITE" id="PS00474">
    <property type="entry name" value="RIBOSOMAL_L3"/>
    <property type="match status" value="1"/>
</dbReference>
<comment type="function">
    <text evidence="1">One of the primary rRNA binding proteins, it binds directly near the 3'-end of the 23S rRNA, where it nucleates assembly of the 50S subunit.</text>
</comment>
<comment type="subunit">
    <text evidence="1">Part of the 50S ribosomal subunit. Forms a cluster with proteins L14 and L19.</text>
</comment>
<comment type="PTM">
    <text evidence="1">Methylated by PrmB.</text>
</comment>
<comment type="similarity">
    <text evidence="1">Belongs to the universal ribosomal protein uL3 family.</text>
</comment>
<keyword id="KW-0488">Methylation</keyword>
<keyword id="KW-0687">Ribonucleoprotein</keyword>
<keyword id="KW-0689">Ribosomal protein</keyword>
<keyword id="KW-0694">RNA-binding</keyword>
<keyword id="KW-0699">rRNA-binding</keyword>
<proteinExistence type="inferred from homology"/>
<feature type="chain" id="PRO_1000052140" description="Large ribosomal subunit protein uL3">
    <location>
        <begin position="1"/>
        <end position="212"/>
    </location>
</feature>
<feature type="region of interest" description="Disordered" evidence="2">
    <location>
        <begin position="136"/>
        <end position="155"/>
    </location>
</feature>
<feature type="modified residue" description="N5-methylglutamine" evidence="1">
    <location>
        <position position="153"/>
    </location>
</feature>